<organism>
    <name type="scientific">Picosynechococcus sp. (strain ATCC 27264 / PCC 7002 / PR-6)</name>
    <name type="common">Agmenellum quadruplicatum</name>
    <dbReference type="NCBI Taxonomy" id="32049"/>
    <lineage>
        <taxon>Bacteria</taxon>
        <taxon>Bacillati</taxon>
        <taxon>Cyanobacteriota</taxon>
        <taxon>Cyanophyceae</taxon>
        <taxon>Oscillatoriophycideae</taxon>
        <taxon>Chroococcales</taxon>
        <taxon>Geminocystaceae</taxon>
        <taxon>Picosynechococcus</taxon>
    </lineage>
</organism>
<sequence>MNATATQDRPIYWGTGRRKASIARVRLVPGSGKVVVNNRSGEDYFNRIPGYLAVLKSPLETLGLESEYDILVNAHGGGLTGQADAVKLGVARALCELDPDNRQPLKIEGYLTRDPRCKERKKYGLHKARKAPQFSKR</sequence>
<name>RS9_PICP2</name>
<dbReference type="EMBL" id="CP000951">
    <property type="protein sequence ID" value="ACA99040.1"/>
    <property type="molecule type" value="Genomic_DNA"/>
</dbReference>
<dbReference type="RefSeq" id="WP_012306664.1">
    <property type="nucleotide sequence ID" value="NZ_JAHHPU010000001.1"/>
</dbReference>
<dbReference type="SMR" id="B1XJI0"/>
<dbReference type="STRING" id="32049.SYNPCC7002_A1038"/>
<dbReference type="KEGG" id="syp:SYNPCC7002_A1038"/>
<dbReference type="eggNOG" id="COG0103">
    <property type="taxonomic scope" value="Bacteria"/>
</dbReference>
<dbReference type="HOGENOM" id="CLU_046483_2_1_3"/>
<dbReference type="Proteomes" id="UP000001688">
    <property type="component" value="Chromosome"/>
</dbReference>
<dbReference type="GO" id="GO:0022627">
    <property type="term" value="C:cytosolic small ribosomal subunit"/>
    <property type="evidence" value="ECO:0007669"/>
    <property type="project" value="TreeGrafter"/>
</dbReference>
<dbReference type="GO" id="GO:0003723">
    <property type="term" value="F:RNA binding"/>
    <property type="evidence" value="ECO:0007669"/>
    <property type="project" value="TreeGrafter"/>
</dbReference>
<dbReference type="GO" id="GO:0003735">
    <property type="term" value="F:structural constituent of ribosome"/>
    <property type="evidence" value="ECO:0007669"/>
    <property type="project" value="InterPro"/>
</dbReference>
<dbReference type="GO" id="GO:0006412">
    <property type="term" value="P:translation"/>
    <property type="evidence" value="ECO:0007669"/>
    <property type="project" value="UniProtKB-UniRule"/>
</dbReference>
<dbReference type="FunFam" id="3.30.230.10:FF:000001">
    <property type="entry name" value="30S ribosomal protein S9"/>
    <property type="match status" value="1"/>
</dbReference>
<dbReference type="Gene3D" id="3.30.230.10">
    <property type="match status" value="1"/>
</dbReference>
<dbReference type="HAMAP" id="MF_00532_B">
    <property type="entry name" value="Ribosomal_uS9_B"/>
    <property type="match status" value="1"/>
</dbReference>
<dbReference type="InterPro" id="IPR020568">
    <property type="entry name" value="Ribosomal_Su5_D2-typ_SF"/>
</dbReference>
<dbReference type="InterPro" id="IPR000754">
    <property type="entry name" value="Ribosomal_uS9"/>
</dbReference>
<dbReference type="InterPro" id="IPR023035">
    <property type="entry name" value="Ribosomal_uS9_bac/plastid"/>
</dbReference>
<dbReference type="InterPro" id="IPR020574">
    <property type="entry name" value="Ribosomal_uS9_CS"/>
</dbReference>
<dbReference type="InterPro" id="IPR014721">
    <property type="entry name" value="Ribsml_uS5_D2-typ_fold_subgr"/>
</dbReference>
<dbReference type="NCBIfam" id="NF001099">
    <property type="entry name" value="PRK00132.1"/>
    <property type="match status" value="1"/>
</dbReference>
<dbReference type="PANTHER" id="PTHR21569">
    <property type="entry name" value="RIBOSOMAL PROTEIN S9"/>
    <property type="match status" value="1"/>
</dbReference>
<dbReference type="PANTHER" id="PTHR21569:SF1">
    <property type="entry name" value="SMALL RIBOSOMAL SUBUNIT PROTEIN US9M"/>
    <property type="match status" value="1"/>
</dbReference>
<dbReference type="Pfam" id="PF00380">
    <property type="entry name" value="Ribosomal_S9"/>
    <property type="match status" value="1"/>
</dbReference>
<dbReference type="SUPFAM" id="SSF54211">
    <property type="entry name" value="Ribosomal protein S5 domain 2-like"/>
    <property type="match status" value="1"/>
</dbReference>
<dbReference type="PROSITE" id="PS00360">
    <property type="entry name" value="RIBOSOMAL_S9"/>
    <property type="match status" value="1"/>
</dbReference>
<reference key="1">
    <citation type="submission" date="2008-02" db="EMBL/GenBank/DDBJ databases">
        <title>Complete sequence of Synechococcus sp. PCC 7002.</title>
        <authorList>
            <person name="Li T."/>
            <person name="Zhao J."/>
            <person name="Zhao C."/>
            <person name="Liu Z."/>
            <person name="Zhao F."/>
            <person name="Marquardt J."/>
            <person name="Nomura C.T."/>
            <person name="Persson S."/>
            <person name="Detter J.C."/>
            <person name="Richardson P.M."/>
            <person name="Lanz C."/>
            <person name="Schuster S.C."/>
            <person name="Wang J."/>
            <person name="Li S."/>
            <person name="Huang X."/>
            <person name="Cai T."/>
            <person name="Yu Z."/>
            <person name="Luo J."/>
            <person name="Zhao J."/>
            <person name="Bryant D.A."/>
        </authorList>
    </citation>
    <scope>NUCLEOTIDE SEQUENCE [LARGE SCALE GENOMIC DNA]</scope>
    <source>
        <strain>ATCC 27264 / PCC 7002 / PR-6</strain>
    </source>
</reference>
<protein>
    <recommendedName>
        <fullName evidence="1">Small ribosomal subunit protein uS9</fullName>
    </recommendedName>
    <alternativeName>
        <fullName evidence="2">30S ribosomal protein S9</fullName>
    </alternativeName>
</protein>
<proteinExistence type="inferred from homology"/>
<accession>B1XJI0</accession>
<keyword id="KW-1185">Reference proteome</keyword>
<keyword id="KW-0687">Ribonucleoprotein</keyword>
<keyword id="KW-0689">Ribosomal protein</keyword>
<feature type="chain" id="PRO_1000128187" description="Small ribosomal subunit protein uS9">
    <location>
        <begin position="1"/>
        <end position="137"/>
    </location>
</feature>
<gene>
    <name evidence="1" type="primary">rpsI</name>
    <name evidence="1" type="synonym">rps9</name>
    <name type="ordered locus">SYNPCC7002_A1038</name>
</gene>
<evidence type="ECO:0000255" key="1">
    <source>
        <dbReference type="HAMAP-Rule" id="MF_00532"/>
    </source>
</evidence>
<evidence type="ECO:0000305" key="2"/>
<comment type="similarity">
    <text evidence="1">Belongs to the universal ribosomal protein uS9 family.</text>
</comment>